<proteinExistence type="evidence at transcript level"/>
<reference key="1">
    <citation type="submission" date="2001-09" db="EMBL/GenBank/DDBJ databases">
        <title>Cloning of a cDNA encoding the luteinizing hormone beta chain precursor in the marsupial, Monodelphis domestica.</title>
        <authorList>
            <person name="Kacsoh B."/>
        </authorList>
    </citation>
    <scope>NUCLEOTIDE SEQUENCE [MRNA]</scope>
    <source>
        <tissue>Pituitary</tissue>
    </source>
</reference>
<keyword id="KW-1015">Disulfide bond</keyword>
<keyword id="KW-0325">Glycoprotein</keyword>
<keyword id="KW-0372">Hormone</keyword>
<keyword id="KW-1185">Reference proteome</keyword>
<keyword id="KW-0964">Secreted</keyword>
<keyword id="KW-0732">Signal</keyword>
<protein>
    <recommendedName>
        <fullName>Lutropin subunit beta</fullName>
        <shortName>Lutropin beta chain</shortName>
    </recommendedName>
    <alternativeName>
        <fullName>Luteinizing hormone subunit beta</fullName>
        <shortName>LH-B</shortName>
        <shortName>LSH-B</shortName>
        <shortName>LSH-beta</shortName>
    </alternativeName>
</protein>
<evidence type="ECO:0000250" key="1"/>
<evidence type="ECO:0000255" key="2"/>
<evidence type="ECO:0000305" key="3"/>
<sequence length="141" mass="15032">MERYQELTVLLLLLLLEGGSGGAGSFRPLCRPTNATLAAESDACPVCVTFTTTICAGYCPSMVRVLPAALPPGPQLVCTYRELTFSWIRLPGCPPGVDPIFSFPVALSCACGSCRLSHSDCGGPRARPHLCTRPHLSLRLL</sequence>
<organism>
    <name type="scientific">Monodelphis domestica</name>
    <name type="common">Gray short-tailed opossum</name>
    <dbReference type="NCBI Taxonomy" id="13616"/>
    <lineage>
        <taxon>Eukaryota</taxon>
        <taxon>Metazoa</taxon>
        <taxon>Chordata</taxon>
        <taxon>Craniata</taxon>
        <taxon>Vertebrata</taxon>
        <taxon>Euteleostomi</taxon>
        <taxon>Mammalia</taxon>
        <taxon>Metatheria</taxon>
        <taxon>Didelphimorphia</taxon>
        <taxon>Didelphidae</taxon>
        <taxon>Monodelphis</taxon>
    </lineage>
</organism>
<feature type="signal peptide" evidence="2">
    <location>
        <begin position="1"/>
        <end position="21"/>
    </location>
</feature>
<feature type="chain" id="PRO_0000042866" description="Lutropin subunit beta">
    <location>
        <begin position="22"/>
        <end position="141"/>
    </location>
</feature>
<feature type="glycosylation site" description="N-linked (GlcNAc...) asparagine" evidence="2">
    <location>
        <position position="34"/>
    </location>
</feature>
<feature type="disulfide bond" evidence="1">
    <location>
        <begin position="30"/>
        <end position="78"/>
    </location>
</feature>
<feature type="disulfide bond" evidence="1">
    <location>
        <begin position="44"/>
        <end position="93"/>
    </location>
</feature>
<feature type="disulfide bond" evidence="1">
    <location>
        <begin position="47"/>
        <end position="131"/>
    </location>
</feature>
<feature type="disulfide bond" evidence="1">
    <location>
        <begin position="55"/>
        <end position="109"/>
    </location>
</feature>
<feature type="disulfide bond" evidence="1">
    <location>
        <begin position="59"/>
        <end position="111"/>
    </location>
</feature>
<feature type="disulfide bond" evidence="1">
    <location>
        <begin position="114"/>
        <end position="121"/>
    </location>
</feature>
<gene>
    <name type="primary">LHB</name>
</gene>
<accession>Q95J85</accession>
<comment type="function">
    <text evidence="1">Promotes spermatogenesis and ovulation by stimulating the testes and ovaries to synthesize steroids.</text>
</comment>
<comment type="subunit">
    <text evidence="1">Heterodimer of a common alpha chain and a unique beta chain which confers biological specificity to thyrotropin, lutropin, follitropin and gonadotropin.</text>
</comment>
<comment type="subcellular location">
    <subcellularLocation>
        <location>Secreted</location>
    </subcellularLocation>
</comment>
<comment type="similarity">
    <text evidence="3">Belongs to the glycoprotein hormones subunit beta family.</text>
</comment>
<name>LSHB_MONDO</name>
<dbReference type="EMBL" id="AY056475">
    <property type="protein sequence ID" value="AAL13337.1"/>
    <property type="molecule type" value="mRNA"/>
</dbReference>
<dbReference type="RefSeq" id="NP_001028143.1">
    <property type="nucleotide sequence ID" value="NM_001032971.1"/>
</dbReference>
<dbReference type="SMR" id="Q95J85"/>
<dbReference type="FunCoup" id="Q95J85">
    <property type="interactions" value="190"/>
</dbReference>
<dbReference type="STRING" id="13616.ENSMODP00000017212"/>
<dbReference type="GlyCosmos" id="Q95J85">
    <property type="glycosylation" value="1 site, No reported glycans"/>
</dbReference>
<dbReference type="GeneID" id="497247"/>
<dbReference type="KEGG" id="mdo:497247"/>
<dbReference type="CTD" id="3972"/>
<dbReference type="eggNOG" id="ENOG502S49V">
    <property type="taxonomic scope" value="Eukaryota"/>
</dbReference>
<dbReference type="InParanoid" id="Q95J85"/>
<dbReference type="OrthoDB" id="8453657at2759"/>
<dbReference type="Proteomes" id="UP000002280">
    <property type="component" value="Unplaced"/>
</dbReference>
<dbReference type="GO" id="GO:0005737">
    <property type="term" value="C:cytoplasm"/>
    <property type="evidence" value="ECO:0000318"/>
    <property type="project" value="GO_Central"/>
</dbReference>
<dbReference type="GO" id="GO:0005615">
    <property type="term" value="C:extracellular space"/>
    <property type="evidence" value="ECO:0000318"/>
    <property type="project" value="GO_Central"/>
</dbReference>
<dbReference type="GO" id="GO:0005179">
    <property type="term" value="F:hormone activity"/>
    <property type="evidence" value="ECO:0007669"/>
    <property type="project" value="UniProtKB-KW"/>
</dbReference>
<dbReference type="GO" id="GO:0007186">
    <property type="term" value="P:G protein-coupled receptor signaling pathway"/>
    <property type="evidence" value="ECO:0000318"/>
    <property type="project" value="GO_Central"/>
</dbReference>
<dbReference type="CDD" id="cd00069">
    <property type="entry name" value="GHB_like"/>
    <property type="match status" value="1"/>
</dbReference>
<dbReference type="FunFam" id="2.10.90.10:FF:000007">
    <property type="entry name" value="Luteinizing hormone beta subunit"/>
    <property type="match status" value="1"/>
</dbReference>
<dbReference type="Gene3D" id="2.10.90.10">
    <property type="entry name" value="Cystine-knot cytokines"/>
    <property type="match status" value="1"/>
</dbReference>
<dbReference type="InterPro" id="IPR029034">
    <property type="entry name" value="Cystine-knot_cytokine"/>
</dbReference>
<dbReference type="InterPro" id="IPR006208">
    <property type="entry name" value="Glyco_hormone_CN"/>
</dbReference>
<dbReference type="InterPro" id="IPR001545">
    <property type="entry name" value="Gonadotropin_bsu"/>
</dbReference>
<dbReference type="InterPro" id="IPR018245">
    <property type="entry name" value="Gonadotropin_bsu_CS"/>
</dbReference>
<dbReference type="PANTHER" id="PTHR11515">
    <property type="entry name" value="GLYCOPROTEIN HORMONE BETA CHAIN"/>
    <property type="match status" value="1"/>
</dbReference>
<dbReference type="PANTHER" id="PTHR11515:SF11">
    <property type="entry name" value="LUTROPIN SUBUNIT BETA"/>
    <property type="match status" value="1"/>
</dbReference>
<dbReference type="Pfam" id="PF00007">
    <property type="entry name" value="Cys_knot"/>
    <property type="match status" value="1"/>
</dbReference>
<dbReference type="SMART" id="SM00068">
    <property type="entry name" value="GHB"/>
    <property type="match status" value="1"/>
</dbReference>
<dbReference type="SUPFAM" id="SSF57501">
    <property type="entry name" value="Cystine-knot cytokines"/>
    <property type="match status" value="1"/>
</dbReference>
<dbReference type="PROSITE" id="PS00261">
    <property type="entry name" value="GLYCO_HORMONE_BETA_1"/>
    <property type="match status" value="1"/>
</dbReference>
<dbReference type="PROSITE" id="PS00689">
    <property type="entry name" value="GLYCO_HORMONE_BETA_2"/>
    <property type="match status" value="1"/>
</dbReference>